<comment type="function">
    <text evidence="1">Ligates lysine onto the cytidine present at position 34 of the AUA codon-specific tRNA(Ile) that contains the anticodon CAU, in an ATP-dependent manner. Cytidine is converted to lysidine, thus changing the amino acid specificity of the tRNA from methionine to isoleucine.</text>
</comment>
<comment type="catalytic activity">
    <reaction evidence="1">
        <text>cytidine(34) in tRNA(Ile2) + L-lysine + ATP = lysidine(34) in tRNA(Ile2) + AMP + diphosphate + H(+)</text>
        <dbReference type="Rhea" id="RHEA:43744"/>
        <dbReference type="Rhea" id="RHEA-COMP:10625"/>
        <dbReference type="Rhea" id="RHEA-COMP:10670"/>
        <dbReference type="ChEBI" id="CHEBI:15378"/>
        <dbReference type="ChEBI" id="CHEBI:30616"/>
        <dbReference type="ChEBI" id="CHEBI:32551"/>
        <dbReference type="ChEBI" id="CHEBI:33019"/>
        <dbReference type="ChEBI" id="CHEBI:82748"/>
        <dbReference type="ChEBI" id="CHEBI:83665"/>
        <dbReference type="ChEBI" id="CHEBI:456215"/>
        <dbReference type="EC" id="6.3.4.19"/>
    </reaction>
</comment>
<comment type="subcellular location">
    <subcellularLocation>
        <location evidence="1">Cytoplasm</location>
    </subcellularLocation>
</comment>
<comment type="domain">
    <text>The N-terminal region contains the highly conserved SGGXDS motif, predicted to be a P-loop motif involved in ATP binding.</text>
</comment>
<comment type="similarity">
    <text evidence="1">Belongs to the tRNA(Ile)-lysidine synthase family.</text>
</comment>
<organism>
    <name type="scientific">Pseudomonas putida (strain ATCC 47054 / DSM 6125 / CFBP 8728 / NCIMB 11950 / KT2440)</name>
    <dbReference type="NCBI Taxonomy" id="160488"/>
    <lineage>
        <taxon>Bacteria</taxon>
        <taxon>Pseudomonadati</taxon>
        <taxon>Pseudomonadota</taxon>
        <taxon>Gammaproteobacteria</taxon>
        <taxon>Pseudomonadales</taxon>
        <taxon>Pseudomonadaceae</taxon>
        <taxon>Pseudomonas</taxon>
    </lineage>
</organism>
<reference key="1">
    <citation type="journal article" date="2002" name="Environ. Microbiol.">
        <title>Complete genome sequence and comparative analysis of the metabolically versatile Pseudomonas putida KT2440.</title>
        <authorList>
            <person name="Nelson K.E."/>
            <person name="Weinel C."/>
            <person name="Paulsen I.T."/>
            <person name="Dodson R.J."/>
            <person name="Hilbert H."/>
            <person name="Martins dos Santos V.A.P."/>
            <person name="Fouts D.E."/>
            <person name="Gill S.R."/>
            <person name="Pop M."/>
            <person name="Holmes M."/>
            <person name="Brinkac L.M."/>
            <person name="Beanan M.J."/>
            <person name="DeBoy R.T."/>
            <person name="Daugherty S.C."/>
            <person name="Kolonay J.F."/>
            <person name="Madupu R."/>
            <person name="Nelson W.C."/>
            <person name="White O."/>
            <person name="Peterson J.D."/>
            <person name="Khouri H.M."/>
            <person name="Hance I."/>
            <person name="Chris Lee P."/>
            <person name="Holtzapple E.K."/>
            <person name="Scanlan D."/>
            <person name="Tran K."/>
            <person name="Moazzez A."/>
            <person name="Utterback T.R."/>
            <person name="Rizzo M."/>
            <person name="Lee K."/>
            <person name="Kosack D."/>
            <person name="Moestl D."/>
            <person name="Wedler H."/>
            <person name="Lauber J."/>
            <person name="Stjepandic D."/>
            <person name="Hoheisel J."/>
            <person name="Straetz M."/>
            <person name="Heim S."/>
            <person name="Kiewitz C."/>
            <person name="Eisen J.A."/>
            <person name="Timmis K.N."/>
            <person name="Duesterhoeft A."/>
            <person name="Tuemmler B."/>
            <person name="Fraser C.M."/>
        </authorList>
    </citation>
    <scope>NUCLEOTIDE SEQUENCE [LARGE SCALE GENOMIC DNA]</scope>
    <source>
        <strain>ATCC 47054 / DSM 6125 / CFBP 8728 / NCIMB 11950 / KT2440</strain>
    </source>
</reference>
<name>TILS_PSEPK</name>
<sequence length="427" mass="47063">MINLTPWLNAPTWYVAFSGGLDSTVLLHLLAEYARNHASPPLRAIHIHHGLQAAADAWPAHCQAICDNFDVELQVIHVQVSPGASLEQAARDARYAAFRQVLGPGDILFTGQHRDDQAETLLFRLLRGAGLRGLAAMPGQRALGQGSLVRPLLACSRQHLQEYAQAQGLTWIEDPSNVDTQFARNYLRGEVMPHLQQRWPQASQNFARAAEHLGEALGLLDELAQEDLALAGKGAPLAWPGLDSLDLAALLALSPARQRNALQYWLSQRTRLPDTRHWAGWADLRDAGADARPVWRLADGRLVRSHGRIWWLSGDWLQQPAGSLAWPDPDGPLRLPGNGCVRLVGAAVPSGLRIAYRQGGEMLEVPGRGRRDLKRLLNEQQVPHFLRSRLPLLYHGECLLAVANLPGLVQADCQLHWQLPTNAQGLS</sequence>
<proteinExistence type="inferred from homology"/>
<feature type="chain" id="PRO_0000181749" description="tRNA(Ile)-lysidine synthase">
    <location>
        <begin position="1"/>
        <end position="427"/>
    </location>
</feature>
<feature type="binding site" evidence="1">
    <location>
        <begin position="18"/>
        <end position="23"/>
    </location>
    <ligand>
        <name>ATP</name>
        <dbReference type="ChEBI" id="CHEBI:30616"/>
    </ligand>
</feature>
<protein>
    <recommendedName>
        <fullName evidence="1">tRNA(Ile)-lysidine synthase</fullName>
        <ecNumber evidence="1">6.3.4.19</ecNumber>
    </recommendedName>
    <alternativeName>
        <fullName evidence="1">tRNA(Ile)-2-lysyl-cytidine synthase</fullName>
    </alternativeName>
    <alternativeName>
        <fullName evidence="1">tRNA(Ile)-lysidine synthetase</fullName>
    </alternativeName>
</protein>
<keyword id="KW-0067">ATP-binding</keyword>
<keyword id="KW-0963">Cytoplasm</keyword>
<keyword id="KW-0436">Ligase</keyword>
<keyword id="KW-0547">Nucleotide-binding</keyword>
<keyword id="KW-1185">Reference proteome</keyword>
<keyword id="KW-0819">tRNA processing</keyword>
<dbReference type="EC" id="6.3.4.19" evidence="1"/>
<dbReference type="EMBL" id="AE015451">
    <property type="protein sequence ID" value="AAN67229.1"/>
    <property type="molecule type" value="Genomic_DNA"/>
</dbReference>
<dbReference type="RefSeq" id="NP_743765.1">
    <property type="nucleotide sequence ID" value="NC_002947.4"/>
</dbReference>
<dbReference type="RefSeq" id="WP_010952684.1">
    <property type="nucleotide sequence ID" value="NZ_CP169744.1"/>
</dbReference>
<dbReference type="SMR" id="Q88MG3"/>
<dbReference type="STRING" id="160488.PP_1608"/>
<dbReference type="PaxDb" id="160488-PP_1608"/>
<dbReference type="GeneID" id="83681912"/>
<dbReference type="KEGG" id="ppu:PP_1608"/>
<dbReference type="PATRIC" id="fig|160488.4.peg.1699"/>
<dbReference type="eggNOG" id="COG0037">
    <property type="taxonomic scope" value="Bacteria"/>
</dbReference>
<dbReference type="HOGENOM" id="CLU_018869_2_0_6"/>
<dbReference type="OrthoDB" id="9807403at2"/>
<dbReference type="PhylomeDB" id="Q88MG3"/>
<dbReference type="BioCyc" id="PPUT160488:G1G01-1705-MONOMER"/>
<dbReference type="Proteomes" id="UP000000556">
    <property type="component" value="Chromosome"/>
</dbReference>
<dbReference type="GO" id="GO:0005737">
    <property type="term" value="C:cytoplasm"/>
    <property type="evidence" value="ECO:0007669"/>
    <property type="project" value="UniProtKB-SubCell"/>
</dbReference>
<dbReference type="GO" id="GO:0005524">
    <property type="term" value="F:ATP binding"/>
    <property type="evidence" value="ECO:0007669"/>
    <property type="project" value="UniProtKB-UniRule"/>
</dbReference>
<dbReference type="GO" id="GO:0032267">
    <property type="term" value="F:tRNA(Ile)-lysidine synthase activity"/>
    <property type="evidence" value="ECO:0007669"/>
    <property type="project" value="UniProtKB-EC"/>
</dbReference>
<dbReference type="GO" id="GO:0006400">
    <property type="term" value="P:tRNA modification"/>
    <property type="evidence" value="ECO:0007669"/>
    <property type="project" value="UniProtKB-UniRule"/>
</dbReference>
<dbReference type="CDD" id="cd01992">
    <property type="entry name" value="TilS_N"/>
    <property type="match status" value="1"/>
</dbReference>
<dbReference type="Gene3D" id="1.20.59.20">
    <property type="match status" value="1"/>
</dbReference>
<dbReference type="Gene3D" id="3.40.50.620">
    <property type="entry name" value="HUPs"/>
    <property type="match status" value="1"/>
</dbReference>
<dbReference type="HAMAP" id="MF_01161">
    <property type="entry name" value="tRNA_Ile_lys_synt"/>
    <property type="match status" value="1"/>
</dbReference>
<dbReference type="InterPro" id="IPR012796">
    <property type="entry name" value="Lysidine-tRNA-synth_C"/>
</dbReference>
<dbReference type="InterPro" id="IPR014729">
    <property type="entry name" value="Rossmann-like_a/b/a_fold"/>
</dbReference>
<dbReference type="InterPro" id="IPR011063">
    <property type="entry name" value="TilS/TtcA_N"/>
</dbReference>
<dbReference type="InterPro" id="IPR012094">
    <property type="entry name" value="tRNA_Ile_lys_synt"/>
</dbReference>
<dbReference type="InterPro" id="IPR012795">
    <property type="entry name" value="tRNA_Ile_lys_synt_N"/>
</dbReference>
<dbReference type="InterPro" id="IPR015262">
    <property type="entry name" value="tRNA_Ile_lys_synt_subst-bd"/>
</dbReference>
<dbReference type="NCBIfam" id="TIGR02433">
    <property type="entry name" value="lysidine_TilS_C"/>
    <property type="match status" value="1"/>
</dbReference>
<dbReference type="NCBIfam" id="TIGR02432">
    <property type="entry name" value="lysidine_TilS_N"/>
    <property type="match status" value="1"/>
</dbReference>
<dbReference type="PANTHER" id="PTHR43033">
    <property type="entry name" value="TRNA(ILE)-LYSIDINE SYNTHASE-RELATED"/>
    <property type="match status" value="1"/>
</dbReference>
<dbReference type="PANTHER" id="PTHR43033:SF1">
    <property type="entry name" value="TRNA(ILE)-LYSIDINE SYNTHASE-RELATED"/>
    <property type="match status" value="1"/>
</dbReference>
<dbReference type="Pfam" id="PF01171">
    <property type="entry name" value="ATP_bind_3"/>
    <property type="match status" value="1"/>
</dbReference>
<dbReference type="Pfam" id="PF09179">
    <property type="entry name" value="TilS"/>
    <property type="match status" value="1"/>
</dbReference>
<dbReference type="Pfam" id="PF11734">
    <property type="entry name" value="TilS_C"/>
    <property type="match status" value="1"/>
</dbReference>
<dbReference type="SMART" id="SM00977">
    <property type="entry name" value="TilS_C"/>
    <property type="match status" value="1"/>
</dbReference>
<dbReference type="SUPFAM" id="SSF52402">
    <property type="entry name" value="Adenine nucleotide alpha hydrolases-like"/>
    <property type="match status" value="1"/>
</dbReference>
<dbReference type="SUPFAM" id="SSF82829">
    <property type="entry name" value="MesJ substrate recognition domain-like"/>
    <property type="match status" value="1"/>
</dbReference>
<dbReference type="SUPFAM" id="SSF56037">
    <property type="entry name" value="PheT/TilS domain"/>
    <property type="match status" value="1"/>
</dbReference>
<evidence type="ECO:0000255" key="1">
    <source>
        <dbReference type="HAMAP-Rule" id="MF_01161"/>
    </source>
</evidence>
<gene>
    <name evidence="1" type="primary">tilS</name>
    <name type="ordered locus">PP_1608</name>
</gene>
<accession>Q88MG3</accession>